<dbReference type="EMBL" id="BC102107">
    <property type="protein sequence ID" value="AAI02108.1"/>
    <property type="molecule type" value="mRNA"/>
</dbReference>
<dbReference type="RefSeq" id="NP_001029530.1">
    <property type="nucleotide sequence ID" value="NM_001034358.2"/>
</dbReference>
<dbReference type="SMR" id="Q3ZCK5"/>
<dbReference type="FunCoup" id="Q3ZCK5">
    <property type="interactions" value="2943"/>
</dbReference>
<dbReference type="STRING" id="9913.ENSBTAP00000037680"/>
<dbReference type="PaxDb" id="9913-ENSBTAP00000037680"/>
<dbReference type="Ensembl" id="ENSBTAT00000037858.3">
    <property type="protein sequence ID" value="ENSBTAP00000037680.2"/>
    <property type="gene ID" value="ENSBTAG00000015744.5"/>
</dbReference>
<dbReference type="GeneID" id="509717"/>
<dbReference type="KEGG" id="bta:509717"/>
<dbReference type="CTD" id="892"/>
<dbReference type="VEuPathDB" id="HostDB:ENSBTAG00000015744"/>
<dbReference type="VGNC" id="VGNC:26961">
    <property type="gene designation" value="CCNC"/>
</dbReference>
<dbReference type="eggNOG" id="KOG0794">
    <property type="taxonomic scope" value="Eukaryota"/>
</dbReference>
<dbReference type="GeneTree" id="ENSGT00940000155625"/>
<dbReference type="HOGENOM" id="CLU_034754_1_1_1"/>
<dbReference type="InParanoid" id="Q3ZCK5"/>
<dbReference type="OMA" id="CLLHPPH"/>
<dbReference type="OrthoDB" id="10266018at2759"/>
<dbReference type="Reactome" id="R-BTA-212436">
    <property type="pathway name" value="Generic Transcription Pathway"/>
</dbReference>
<dbReference type="Reactome" id="R-BTA-2173796">
    <property type="pathway name" value="SMAD2/SMAD3:SMAD4 heterotrimer regulates transcription"/>
</dbReference>
<dbReference type="Reactome" id="R-BTA-9841922">
    <property type="pathway name" value="MLL4 and MLL3 complexes regulate expression of PPARG target genes in adipogenesis and hepatic steatosis"/>
</dbReference>
<dbReference type="Proteomes" id="UP000009136">
    <property type="component" value="Chromosome 9"/>
</dbReference>
<dbReference type="Bgee" id="ENSBTAG00000015744">
    <property type="expression patterns" value="Expressed in caput epididymis and 104 other cell types or tissues"/>
</dbReference>
<dbReference type="GO" id="GO:1990508">
    <property type="term" value="C:CKM complex"/>
    <property type="evidence" value="ECO:0007669"/>
    <property type="project" value="Ensembl"/>
</dbReference>
<dbReference type="GO" id="GO:0016592">
    <property type="term" value="C:mediator complex"/>
    <property type="evidence" value="ECO:0000318"/>
    <property type="project" value="GO_Central"/>
</dbReference>
<dbReference type="GO" id="GO:0005634">
    <property type="term" value="C:nucleus"/>
    <property type="evidence" value="ECO:0000318"/>
    <property type="project" value="GO_Central"/>
</dbReference>
<dbReference type="GO" id="GO:0016538">
    <property type="term" value="F:cyclin-dependent protein serine/threonine kinase regulator activity"/>
    <property type="evidence" value="ECO:0000318"/>
    <property type="project" value="GO_Central"/>
</dbReference>
<dbReference type="GO" id="GO:0042802">
    <property type="term" value="F:identical protein binding"/>
    <property type="evidence" value="ECO:0007669"/>
    <property type="project" value="Ensembl"/>
</dbReference>
<dbReference type="GO" id="GO:0045023">
    <property type="term" value="P:G0 to G1 transition"/>
    <property type="evidence" value="ECO:0007669"/>
    <property type="project" value="Ensembl"/>
</dbReference>
<dbReference type="GO" id="GO:0045746">
    <property type="term" value="P:negative regulation of Notch signaling pathway"/>
    <property type="evidence" value="ECO:0007669"/>
    <property type="project" value="Ensembl"/>
</dbReference>
<dbReference type="GO" id="GO:0045944">
    <property type="term" value="P:positive regulation of transcription by RNA polymerase II"/>
    <property type="evidence" value="ECO:0000318"/>
    <property type="project" value="GO_Central"/>
</dbReference>
<dbReference type="CDD" id="cd20513">
    <property type="entry name" value="CYCLIN_CCNC_rpt1"/>
    <property type="match status" value="1"/>
</dbReference>
<dbReference type="CDD" id="cd20514">
    <property type="entry name" value="CYCLIN_CCNC_rpt2"/>
    <property type="match status" value="1"/>
</dbReference>
<dbReference type="FunFam" id="1.10.472.10:FF:000015">
    <property type="entry name" value="Putative cyclin-c"/>
    <property type="match status" value="1"/>
</dbReference>
<dbReference type="Gene3D" id="1.10.472.10">
    <property type="entry name" value="Cyclin-like"/>
    <property type="match status" value="2"/>
</dbReference>
<dbReference type="InterPro" id="IPR013763">
    <property type="entry name" value="Cyclin-like_dom"/>
</dbReference>
<dbReference type="InterPro" id="IPR036915">
    <property type="entry name" value="Cyclin-like_sf"/>
</dbReference>
<dbReference type="InterPro" id="IPR043198">
    <property type="entry name" value="Cyclin/Ssn8"/>
</dbReference>
<dbReference type="InterPro" id="IPR031658">
    <property type="entry name" value="Cyclin_C_2"/>
</dbReference>
<dbReference type="InterPro" id="IPR006671">
    <property type="entry name" value="Cyclin_N"/>
</dbReference>
<dbReference type="PANTHER" id="PTHR10026">
    <property type="entry name" value="CYCLIN"/>
    <property type="match status" value="1"/>
</dbReference>
<dbReference type="Pfam" id="PF16899">
    <property type="entry name" value="Cyclin_C_2"/>
    <property type="match status" value="1"/>
</dbReference>
<dbReference type="Pfam" id="PF00134">
    <property type="entry name" value="Cyclin_N"/>
    <property type="match status" value="1"/>
</dbReference>
<dbReference type="PIRSF" id="PIRSF028758">
    <property type="entry name" value="Cyclin, C/H/G types"/>
    <property type="match status" value="1"/>
</dbReference>
<dbReference type="SMART" id="SM00385">
    <property type="entry name" value="CYCLIN"/>
    <property type="match status" value="2"/>
</dbReference>
<dbReference type="SUPFAM" id="SSF47954">
    <property type="entry name" value="Cyclin-like"/>
    <property type="match status" value="2"/>
</dbReference>
<name>CCNC_BOVIN</name>
<proteinExistence type="evidence at transcript level"/>
<evidence type="ECO:0000250" key="1"/>
<evidence type="ECO:0000250" key="2">
    <source>
        <dbReference type="UniProtKB" id="P24863"/>
    </source>
</evidence>
<evidence type="ECO:0000256" key="3">
    <source>
        <dbReference type="SAM" id="MobiDB-lite"/>
    </source>
</evidence>
<evidence type="ECO:0000305" key="4"/>
<keyword id="KW-0010">Activator</keyword>
<keyword id="KW-0195">Cyclin</keyword>
<keyword id="KW-0539">Nucleus</keyword>
<keyword id="KW-0597">Phosphoprotein</keyword>
<keyword id="KW-1185">Reference proteome</keyword>
<keyword id="KW-0678">Repressor</keyword>
<keyword id="KW-0804">Transcription</keyword>
<keyword id="KW-0805">Transcription regulation</keyword>
<sequence>MAGNFWQSSHYLQWILDKQDLLKERQKDLKFLSEEEYWKLQIFFTNVIQALGEHLKLRQQVIATATVYFKRFYARYSLKSIDPVLMAPTCVFLASKVEEFGVVSNTRLIAAATSVLKTRFSYAFPKEFPYKMNHVLECEFYLLELMDCCLIVYHPYRPLLQYVQDMGQEDMLLPLAWRIVNDTYRTDLCLLYPPFMIALACLHVACVVQQKDARQWFAELSVDMEKILEIIRVILKLYEQWKNFDERKEMATILSKMPKPKPPPNSEGEQGPNGSQNSSYSQS</sequence>
<reference key="1">
    <citation type="submission" date="2005-08" db="EMBL/GenBank/DDBJ databases">
        <authorList>
            <consortium name="NIH - Mammalian Gene Collection (MGC) project"/>
        </authorList>
    </citation>
    <scope>NUCLEOTIDE SEQUENCE [LARGE SCALE MRNA]</scope>
    <source>
        <strain>Crossbred X Angus</strain>
        <tissue>Ileum</tissue>
    </source>
</reference>
<gene>
    <name type="primary">CCNC</name>
</gene>
<organism>
    <name type="scientific">Bos taurus</name>
    <name type="common">Bovine</name>
    <dbReference type="NCBI Taxonomy" id="9913"/>
    <lineage>
        <taxon>Eukaryota</taxon>
        <taxon>Metazoa</taxon>
        <taxon>Chordata</taxon>
        <taxon>Craniata</taxon>
        <taxon>Vertebrata</taxon>
        <taxon>Euteleostomi</taxon>
        <taxon>Mammalia</taxon>
        <taxon>Eutheria</taxon>
        <taxon>Laurasiatheria</taxon>
        <taxon>Artiodactyla</taxon>
        <taxon>Ruminantia</taxon>
        <taxon>Pecora</taxon>
        <taxon>Bovidae</taxon>
        <taxon>Bovinae</taxon>
        <taxon>Bos</taxon>
    </lineage>
</organism>
<protein>
    <recommendedName>
        <fullName>Cyclin-C</fullName>
    </recommendedName>
</protein>
<feature type="chain" id="PRO_0000314257" description="Cyclin-C">
    <location>
        <begin position="1"/>
        <end position="283"/>
    </location>
</feature>
<feature type="domain" description="Cyclin N-terminal">
    <location>
        <begin position="46"/>
        <end position="144"/>
    </location>
</feature>
<feature type="region of interest" description="Disordered" evidence="3">
    <location>
        <begin position="252"/>
        <end position="283"/>
    </location>
</feature>
<feature type="compositionally biased region" description="Polar residues" evidence="3">
    <location>
        <begin position="272"/>
        <end position="283"/>
    </location>
</feature>
<feature type="modified residue" description="Phosphoserine" evidence="2">
    <location>
        <position position="275"/>
    </location>
</feature>
<accession>Q3ZCK5</accession>
<comment type="function">
    <text evidence="1">Component of the Mediator complex, a coactivator involved in regulated gene transcription of nearly all RNA polymerase II-dependent genes. Mediator functions as a bridge to convey information from gene-specific regulatory proteins to the basal RNA polymerase II transcription machinery. Mediator is recruited to promoters by direct interactions with regulatory proteins and serves as a scaffold for the assembly of a functional preinitiation complex with RNA polymerase II and the general transcription factors. Binds to and activates cyclin-dependent kinase CDK8 that phosphorylates the CTD (C-terminal domain) of the large subunit of RNA polymerase II (RNAp II), which may inhibit the formation of a transcription initiation complex (By similarity).</text>
</comment>
<comment type="subunit">
    <text evidence="1">Component of the Mediator complex, which is composed of MED1, MED4, MED6, MED7, MED8, MED9, MED10, MED11, MED12, MED13, MED13L, MED14, MED15, MED16, MED17, MED18, MED19, MED20, MED21, MED22, MED23, MED24, MED25, MED26, MED27, MED29, MED30, MED31, CCNC, CDK8 and CDC2L6/CDK11. The MED12, MED13, CCNC and CDK8 subunits form a distinct module termed the CDK8 module. Mediator containing the CDK8 module is less active than Mediator lacking this module in supporting transcriptional activation. Individual preparations of the Mediator complex lacking one or more distinct subunits have been variously termed ARC, CRSP, DRIP, PC2, SMCC and TRAP. The cylin/CDK pair formed by CCNC/CDK8 also associates with the large subunit of RNA polymerase II (By similarity).</text>
</comment>
<comment type="subcellular location">
    <subcellularLocation>
        <location evidence="4">Nucleus</location>
    </subcellularLocation>
</comment>
<comment type="similarity">
    <text evidence="4">Belongs to the cyclin family. Cyclin C subfamily.</text>
</comment>